<accession>C6DIA9</accession>
<proteinExistence type="inferred from homology"/>
<dbReference type="EC" id="5.1.3.20" evidence="1"/>
<dbReference type="EMBL" id="CP001657">
    <property type="protein sequence ID" value="ACT15103.1"/>
    <property type="molecule type" value="Genomic_DNA"/>
</dbReference>
<dbReference type="SMR" id="C6DIA9"/>
<dbReference type="STRING" id="561230.PC1_4088"/>
<dbReference type="KEGG" id="pct:PC1_4088"/>
<dbReference type="eggNOG" id="COG0451">
    <property type="taxonomic scope" value="Bacteria"/>
</dbReference>
<dbReference type="HOGENOM" id="CLU_007383_1_3_6"/>
<dbReference type="OrthoDB" id="9803010at2"/>
<dbReference type="UniPathway" id="UPA00356">
    <property type="reaction ID" value="UER00440"/>
</dbReference>
<dbReference type="Proteomes" id="UP000002736">
    <property type="component" value="Chromosome"/>
</dbReference>
<dbReference type="GO" id="GO:0008712">
    <property type="term" value="F:ADP-glyceromanno-heptose 6-epimerase activity"/>
    <property type="evidence" value="ECO:0007669"/>
    <property type="project" value="UniProtKB-UniRule"/>
</dbReference>
<dbReference type="GO" id="GO:0050661">
    <property type="term" value="F:NADP binding"/>
    <property type="evidence" value="ECO:0007669"/>
    <property type="project" value="InterPro"/>
</dbReference>
<dbReference type="GO" id="GO:0097171">
    <property type="term" value="P:ADP-L-glycero-beta-D-manno-heptose biosynthetic process"/>
    <property type="evidence" value="ECO:0007669"/>
    <property type="project" value="UniProtKB-UniPathway"/>
</dbReference>
<dbReference type="GO" id="GO:0005975">
    <property type="term" value="P:carbohydrate metabolic process"/>
    <property type="evidence" value="ECO:0007669"/>
    <property type="project" value="UniProtKB-UniRule"/>
</dbReference>
<dbReference type="CDD" id="cd05248">
    <property type="entry name" value="ADP_GME_SDR_e"/>
    <property type="match status" value="1"/>
</dbReference>
<dbReference type="Gene3D" id="3.40.50.720">
    <property type="entry name" value="NAD(P)-binding Rossmann-like Domain"/>
    <property type="match status" value="1"/>
</dbReference>
<dbReference type="Gene3D" id="3.90.25.10">
    <property type="entry name" value="UDP-galactose 4-epimerase, domain 1"/>
    <property type="match status" value="1"/>
</dbReference>
<dbReference type="HAMAP" id="MF_01601">
    <property type="entry name" value="Heptose_epimerase"/>
    <property type="match status" value="1"/>
</dbReference>
<dbReference type="InterPro" id="IPR001509">
    <property type="entry name" value="Epimerase_deHydtase"/>
</dbReference>
<dbReference type="InterPro" id="IPR011912">
    <property type="entry name" value="Heptose_epim"/>
</dbReference>
<dbReference type="InterPro" id="IPR036291">
    <property type="entry name" value="NAD(P)-bd_dom_sf"/>
</dbReference>
<dbReference type="NCBIfam" id="TIGR02197">
    <property type="entry name" value="heptose_epim"/>
    <property type="match status" value="1"/>
</dbReference>
<dbReference type="NCBIfam" id="NF008360">
    <property type="entry name" value="PRK11150.1"/>
    <property type="match status" value="1"/>
</dbReference>
<dbReference type="PANTHER" id="PTHR43103:SF3">
    <property type="entry name" value="ADP-L-GLYCERO-D-MANNO-HEPTOSE-6-EPIMERASE"/>
    <property type="match status" value="1"/>
</dbReference>
<dbReference type="PANTHER" id="PTHR43103">
    <property type="entry name" value="NUCLEOSIDE-DIPHOSPHATE-SUGAR EPIMERASE"/>
    <property type="match status" value="1"/>
</dbReference>
<dbReference type="Pfam" id="PF01370">
    <property type="entry name" value="Epimerase"/>
    <property type="match status" value="1"/>
</dbReference>
<dbReference type="SUPFAM" id="SSF51735">
    <property type="entry name" value="NAD(P)-binding Rossmann-fold domains"/>
    <property type="match status" value="1"/>
</dbReference>
<reference key="1">
    <citation type="submission" date="2009-07" db="EMBL/GenBank/DDBJ databases">
        <title>Complete sequence of Pectobacterium carotovorum subsp. carotovorum PC1.</title>
        <authorList>
            <consortium name="US DOE Joint Genome Institute"/>
            <person name="Lucas S."/>
            <person name="Copeland A."/>
            <person name="Lapidus A."/>
            <person name="Glavina del Rio T."/>
            <person name="Tice H."/>
            <person name="Bruce D."/>
            <person name="Goodwin L."/>
            <person name="Pitluck S."/>
            <person name="Munk A.C."/>
            <person name="Brettin T."/>
            <person name="Detter J.C."/>
            <person name="Han C."/>
            <person name="Tapia R."/>
            <person name="Larimer F."/>
            <person name="Land M."/>
            <person name="Hauser L."/>
            <person name="Kyrpides N."/>
            <person name="Mikhailova N."/>
            <person name="Balakrishnan V."/>
            <person name="Glasner J."/>
            <person name="Perna N.T."/>
        </authorList>
    </citation>
    <scope>NUCLEOTIDE SEQUENCE [LARGE SCALE GENOMIC DNA]</scope>
    <source>
        <strain>PC1</strain>
    </source>
</reference>
<gene>
    <name evidence="1" type="primary">hldD</name>
    <name type="ordered locus">PC1_4088</name>
</gene>
<sequence length="310" mass="34827">MIIVTGGAGFIGSNIVKSLNDIGYRDILVVDNLKDGTKFVNLVDLDIADYMDKEDFIASIVAGDDLGDIDAVFHEGACSSTTEWDGKYMMDNNYQYSKDVLHYCLDRNIPFLYASSAATYGGRNDNFIEERQYEQPLNVYGYSKFLFDQYVREILPEAESQICGFRYFNVYGPREGHKGSMASVAFHLNNQINQGENPKLFSGSENFKRDFVYVGDVAAVNLWFWQNGVSGIFNCGTGRAESFQAVADATLAFHKKGGVEYIEFPEKLKGRYQAYTQADLTNLRAAGYDKPFKTVAEGVAEYMAWLNRTV</sequence>
<protein>
    <recommendedName>
        <fullName evidence="1">ADP-L-glycero-D-manno-heptose-6-epimerase</fullName>
        <ecNumber evidence="1">5.1.3.20</ecNumber>
    </recommendedName>
    <alternativeName>
        <fullName evidence="1">ADP-L-glycero-beta-D-manno-heptose-6-epimerase</fullName>
        <shortName evidence="1">ADP-glyceromanno-heptose 6-epimerase</shortName>
        <shortName evidence="1">ADP-hep 6-epimerase</shortName>
        <shortName evidence="1">AGME</shortName>
    </alternativeName>
</protein>
<feature type="chain" id="PRO_1000215688" description="ADP-L-glycero-D-manno-heptose-6-epimerase">
    <location>
        <begin position="1"/>
        <end position="310"/>
    </location>
</feature>
<feature type="active site" description="Proton acceptor" evidence="1">
    <location>
        <position position="140"/>
    </location>
</feature>
<feature type="active site" description="Proton acceptor" evidence="1">
    <location>
        <position position="178"/>
    </location>
</feature>
<feature type="binding site" evidence="1">
    <location>
        <begin position="10"/>
        <end position="11"/>
    </location>
    <ligand>
        <name>NADP(+)</name>
        <dbReference type="ChEBI" id="CHEBI:58349"/>
    </ligand>
</feature>
<feature type="binding site" evidence="1">
    <location>
        <begin position="31"/>
        <end position="32"/>
    </location>
    <ligand>
        <name>NADP(+)</name>
        <dbReference type="ChEBI" id="CHEBI:58349"/>
    </ligand>
</feature>
<feature type="binding site" evidence="1">
    <location>
        <position position="38"/>
    </location>
    <ligand>
        <name>NADP(+)</name>
        <dbReference type="ChEBI" id="CHEBI:58349"/>
    </ligand>
</feature>
<feature type="binding site" evidence="1">
    <location>
        <position position="53"/>
    </location>
    <ligand>
        <name>NADP(+)</name>
        <dbReference type="ChEBI" id="CHEBI:58349"/>
    </ligand>
</feature>
<feature type="binding site" evidence="1">
    <location>
        <begin position="75"/>
        <end position="79"/>
    </location>
    <ligand>
        <name>NADP(+)</name>
        <dbReference type="ChEBI" id="CHEBI:58349"/>
    </ligand>
</feature>
<feature type="binding site" evidence="1">
    <location>
        <position position="92"/>
    </location>
    <ligand>
        <name>NADP(+)</name>
        <dbReference type="ChEBI" id="CHEBI:58349"/>
    </ligand>
</feature>
<feature type="binding site" evidence="1">
    <location>
        <position position="144"/>
    </location>
    <ligand>
        <name>NADP(+)</name>
        <dbReference type="ChEBI" id="CHEBI:58349"/>
    </ligand>
</feature>
<feature type="binding site" evidence="1">
    <location>
        <position position="169"/>
    </location>
    <ligand>
        <name>substrate</name>
    </ligand>
</feature>
<feature type="binding site" evidence="1">
    <location>
        <position position="170"/>
    </location>
    <ligand>
        <name>NADP(+)</name>
        <dbReference type="ChEBI" id="CHEBI:58349"/>
    </ligand>
</feature>
<feature type="binding site" evidence="1">
    <location>
        <position position="178"/>
    </location>
    <ligand>
        <name>NADP(+)</name>
        <dbReference type="ChEBI" id="CHEBI:58349"/>
    </ligand>
</feature>
<feature type="binding site" evidence="1">
    <location>
        <position position="180"/>
    </location>
    <ligand>
        <name>substrate</name>
    </ligand>
</feature>
<feature type="binding site" evidence="1">
    <location>
        <position position="187"/>
    </location>
    <ligand>
        <name>substrate</name>
    </ligand>
</feature>
<feature type="binding site" evidence="1">
    <location>
        <begin position="201"/>
        <end position="204"/>
    </location>
    <ligand>
        <name>substrate</name>
    </ligand>
</feature>
<feature type="binding site" evidence="1">
    <location>
        <position position="209"/>
    </location>
    <ligand>
        <name>substrate</name>
    </ligand>
</feature>
<feature type="binding site" evidence="1">
    <location>
        <position position="272"/>
    </location>
    <ligand>
        <name>substrate</name>
    </ligand>
</feature>
<name>HLDD_PECCP</name>
<organism>
    <name type="scientific">Pectobacterium carotovorum subsp. carotovorum (strain PC1)</name>
    <dbReference type="NCBI Taxonomy" id="561230"/>
    <lineage>
        <taxon>Bacteria</taxon>
        <taxon>Pseudomonadati</taxon>
        <taxon>Pseudomonadota</taxon>
        <taxon>Gammaproteobacteria</taxon>
        <taxon>Enterobacterales</taxon>
        <taxon>Pectobacteriaceae</taxon>
        <taxon>Pectobacterium</taxon>
    </lineage>
</organism>
<comment type="function">
    <text evidence="1">Catalyzes the interconversion between ADP-D-glycero-beta-D-manno-heptose and ADP-L-glycero-beta-D-manno-heptose via an epimerization at carbon 6 of the heptose.</text>
</comment>
<comment type="catalytic activity">
    <reaction evidence="1">
        <text>ADP-D-glycero-beta-D-manno-heptose = ADP-L-glycero-beta-D-manno-heptose</text>
        <dbReference type="Rhea" id="RHEA:17577"/>
        <dbReference type="ChEBI" id="CHEBI:59967"/>
        <dbReference type="ChEBI" id="CHEBI:61506"/>
        <dbReference type="EC" id="5.1.3.20"/>
    </reaction>
</comment>
<comment type="cofactor">
    <cofactor evidence="1">
        <name>NADP(+)</name>
        <dbReference type="ChEBI" id="CHEBI:58349"/>
    </cofactor>
    <text evidence="1">Binds 1 NADP(+) per subunit.</text>
</comment>
<comment type="pathway">
    <text evidence="1">Nucleotide-sugar biosynthesis; ADP-L-glycero-beta-D-manno-heptose biosynthesis; ADP-L-glycero-beta-D-manno-heptose from D-glycero-beta-D-manno-heptose 7-phosphate: step 4/4.</text>
</comment>
<comment type="subunit">
    <text evidence="1">Homopentamer.</text>
</comment>
<comment type="domain">
    <text evidence="1">Contains a large N-terminal NADP-binding domain, and a smaller C-terminal substrate-binding domain.</text>
</comment>
<comment type="similarity">
    <text evidence="1">Belongs to the NAD(P)-dependent epimerase/dehydratase family. HldD subfamily.</text>
</comment>
<keyword id="KW-0119">Carbohydrate metabolism</keyword>
<keyword id="KW-0413">Isomerase</keyword>
<keyword id="KW-0521">NADP</keyword>
<evidence type="ECO:0000255" key="1">
    <source>
        <dbReference type="HAMAP-Rule" id="MF_01601"/>
    </source>
</evidence>